<organism>
    <name type="scientific">Pongo abelii</name>
    <name type="common">Sumatran orangutan</name>
    <name type="synonym">Pongo pygmaeus abelii</name>
    <dbReference type="NCBI Taxonomy" id="9601"/>
    <lineage>
        <taxon>Eukaryota</taxon>
        <taxon>Metazoa</taxon>
        <taxon>Chordata</taxon>
        <taxon>Craniata</taxon>
        <taxon>Vertebrata</taxon>
        <taxon>Euteleostomi</taxon>
        <taxon>Mammalia</taxon>
        <taxon>Eutheria</taxon>
        <taxon>Euarchontoglires</taxon>
        <taxon>Primates</taxon>
        <taxon>Haplorrhini</taxon>
        <taxon>Catarrhini</taxon>
        <taxon>Hominidae</taxon>
        <taxon>Pongo</taxon>
    </lineage>
</organism>
<dbReference type="EMBL" id="CR861337">
    <property type="protein sequence ID" value="CAH93400.1"/>
    <property type="molecule type" value="mRNA"/>
</dbReference>
<dbReference type="RefSeq" id="NP_001126921.1">
    <property type="nucleotide sequence ID" value="NM_001133449.1"/>
</dbReference>
<dbReference type="RefSeq" id="XP_024106391.1">
    <property type="nucleotide sequence ID" value="XM_024250623.3"/>
</dbReference>
<dbReference type="BMRB" id="Q5R4B6"/>
<dbReference type="SMR" id="Q5R4B6"/>
<dbReference type="FunCoup" id="Q5R4B6">
    <property type="interactions" value="205"/>
</dbReference>
<dbReference type="STRING" id="9601.ENSPPYP00000020629"/>
<dbReference type="Ensembl" id="ENSPPYT00000021458.3">
    <property type="protein sequence ID" value="ENSPPYP00000020629.2"/>
    <property type="gene ID" value="ENSPPYG00000018410.3"/>
</dbReference>
<dbReference type="GeneID" id="100173938"/>
<dbReference type="KEGG" id="pon:100173938"/>
<dbReference type="CTD" id="2039"/>
<dbReference type="eggNOG" id="KOG1044">
    <property type="taxonomic scope" value="Eukaryota"/>
</dbReference>
<dbReference type="GeneTree" id="ENSGT00950000182850"/>
<dbReference type="HOGENOM" id="CLU_001357_12_1_1"/>
<dbReference type="InParanoid" id="Q5R4B6"/>
<dbReference type="OMA" id="MLEHKIY"/>
<dbReference type="OrthoDB" id="1746725at2759"/>
<dbReference type="TreeFam" id="TF318042"/>
<dbReference type="Proteomes" id="UP000001595">
    <property type="component" value="Chromosome 8"/>
</dbReference>
<dbReference type="GO" id="GO:0005884">
    <property type="term" value="C:actin filament"/>
    <property type="evidence" value="ECO:0000250"/>
    <property type="project" value="UniProtKB"/>
</dbReference>
<dbReference type="GO" id="GO:0031253">
    <property type="term" value="C:cell projection membrane"/>
    <property type="evidence" value="ECO:0000250"/>
    <property type="project" value="UniProtKB"/>
</dbReference>
<dbReference type="GO" id="GO:0030863">
    <property type="term" value="C:cortical cytoskeleton"/>
    <property type="evidence" value="ECO:0007669"/>
    <property type="project" value="Ensembl"/>
</dbReference>
<dbReference type="GO" id="GO:0031410">
    <property type="term" value="C:cytoplasmic vesicle"/>
    <property type="evidence" value="ECO:0000250"/>
    <property type="project" value="UniProtKB"/>
</dbReference>
<dbReference type="GO" id="GO:0005829">
    <property type="term" value="C:cytosol"/>
    <property type="evidence" value="ECO:0000250"/>
    <property type="project" value="UniProtKB"/>
</dbReference>
<dbReference type="GO" id="GO:0048471">
    <property type="term" value="C:perinuclear region of cytoplasm"/>
    <property type="evidence" value="ECO:0000250"/>
    <property type="project" value="UniProtKB"/>
</dbReference>
<dbReference type="GO" id="GO:0005886">
    <property type="term" value="C:plasma membrane"/>
    <property type="evidence" value="ECO:0000250"/>
    <property type="project" value="UniProtKB"/>
</dbReference>
<dbReference type="GO" id="GO:0031095">
    <property type="term" value="C:platelet dense tubular network membrane"/>
    <property type="evidence" value="ECO:0000250"/>
    <property type="project" value="UniProtKB"/>
</dbReference>
<dbReference type="GO" id="GO:0014069">
    <property type="term" value="C:postsynaptic density"/>
    <property type="evidence" value="ECO:0007669"/>
    <property type="project" value="Ensembl"/>
</dbReference>
<dbReference type="GO" id="GO:0005790">
    <property type="term" value="C:smooth endoplasmic reticulum"/>
    <property type="evidence" value="ECO:0007669"/>
    <property type="project" value="GOC"/>
</dbReference>
<dbReference type="GO" id="GO:0014731">
    <property type="term" value="C:spectrin-associated cytoskeleton"/>
    <property type="evidence" value="ECO:0000250"/>
    <property type="project" value="UniProtKB"/>
</dbReference>
<dbReference type="GO" id="GO:0003779">
    <property type="term" value="F:actin binding"/>
    <property type="evidence" value="ECO:0000250"/>
    <property type="project" value="UniProtKB"/>
</dbReference>
<dbReference type="GO" id="GO:0051015">
    <property type="term" value="F:actin filament binding"/>
    <property type="evidence" value="ECO:0007669"/>
    <property type="project" value="TreeGrafter"/>
</dbReference>
<dbReference type="GO" id="GO:0005102">
    <property type="term" value="F:signaling receptor binding"/>
    <property type="evidence" value="ECO:0000250"/>
    <property type="project" value="UniProtKB"/>
</dbReference>
<dbReference type="GO" id="GO:0030507">
    <property type="term" value="F:spectrin binding"/>
    <property type="evidence" value="ECO:0000250"/>
    <property type="project" value="UniProtKB"/>
</dbReference>
<dbReference type="GO" id="GO:0030036">
    <property type="term" value="P:actin cytoskeleton organization"/>
    <property type="evidence" value="ECO:0000250"/>
    <property type="project" value="UniProtKB"/>
</dbReference>
<dbReference type="GO" id="GO:0051017">
    <property type="term" value="P:actin filament bundle assembly"/>
    <property type="evidence" value="ECO:0000250"/>
    <property type="project" value="UniProtKB"/>
</dbReference>
<dbReference type="GO" id="GO:0051693">
    <property type="term" value="P:actin filament capping"/>
    <property type="evidence" value="ECO:0007669"/>
    <property type="project" value="UniProtKB-KW"/>
</dbReference>
<dbReference type="GO" id="GO:0071320">
    <property type="term" value="P:cellular response to cAMP"/>
    <property type="evidence" value="ECO:0000250"/>
    <property type="project" value="UniProtKB"/>
</dbReference>
<dbReference type="GO" id="GO:0071786">
    <property type="term" value="P:endoplasmic reticulum tubular network organization"/>
    <property type="evidence" value="ECO:0000250"/>
    <property type="project" value="UniProtKB"/>
</dbReference>
<dbReference type="GO" id="GO:0048821">
    <property type="term" value="P:erythrocyte development"/>
    <property type="evidence" value="ECO:0000250"/>
    <property type="project" value="UniProtKB"/>
</dbReference>
<dbReference type="GO" id="GO:0030032">
    <property type="term" value="P:lamellipodium assembly"/>
    <property type="evidence" value="ECO:0007669"/>
    <property type="project" value="TreeGrafter"/>
</dbReference>
<dbReference type="GO" id="GO:0010812">
    <property type="term" value="P:negative regulation of cell-substrate adhesion"/>
    <property type="evidence" value="ECO:0000250"/>
    <property type="project" value="UniProtKB"/>
</dbReference>
<dbReference type="GO" id="GO:0051895">
    <property type="term" value="P:negative regulation of focal adhesion assembly"/>
    <property type="evidence" value="ECO:0000250"/>
    <property type="project" value="UniProtKB"/>
</dbReference>
<dbReference type="GO" id="GO:0033137">
    <property type="term" value="P:negative regulation of peptidyl-serine phosphorylation"/>
    <property type="evidence" value="ECO:0000250"/>
    <property type="project" value="UniProtKB"/>
</dbReference>
<dbReference type="GO" id="GO:0010801">
    <property type="term" value="P:negative regulation of peptidyl-threonine phosphorylation"/>
    <property type="evidence" value="ECO:0000250"/>
    <property type="project" value="UniProtKB"/>
</dbReference>
<dbReference type="GO" id="GO:0050732">
    <property type="term" value="P:negative regulation of peptidyl-tyrosine phosphorylation"/>
    <property type="evidence" value="ECO:0000250"/>
    <property type="project" value="UniProtKB"/>
</dbReference>
<dbReference type="GO" id="GO:0090315">
    <property type="term" value="P:negative regulation of protein targeting to membrane"/>
    <property type="evidence" value="ECO:0000250"/>
    <property type="project" value="UniProtKB"/>
</dbReference>
<dbReference type="GO" id="GO:1900025">
    <property type="term" value="P:negative regulation of substrate adhesion-dependent cell spreading"/>
    <property type="evidence" value="ECO:0000250"/>
    <property type="project" value="UniProtKB"/>
</dbReference>
<dbReference type="GO" id="GO:0010763">
    <property type="term" value="P:positive regulation of fibroblast migration"/>
    <property type="evidence" value="ECO:0000250"/>
    <property type="project" value="UniProtKB"/>
</dbReference>
<dbReference type="GO" id="GO:0090303">
    <property type="term" value="P:positive regulation of wound healing"/>
    <property type="evidence" value="ECO:0000250"/>
    <property type="project" value="UniProtKB"/>
</dbReference>
<dbReference type="GO" id="GO:0065003">
    <property type="term" value="P:protein-containing complex assembly"/>
    <property type="evidence" value="ECO:0000250"/>
    <property type="project" value="UniProtKB"/>
</dbReference>
<dbReference type="GO" id="GO:0032956">
    <property type="term" value="P:regulation of actin cytoskeleton organization"/>
    <property type="evidence" value="ECO:0000250"/>
    <property type="project" value="UniProtKB"/>
</dbReference>
<dbReference type="GO" id="GO:0008360">
    <property type="term" value="P:regulation of cell shape"/>
    <property type="evidence" value="ECO:0000250"/>
    <property type="project" value="UniProtKB"/>
</dbReference>
<dbReference type="GO" id="GO:0051489">
    <property type="term" value="P:regulation of filopodium assembly"/>
    <property type="evidence" value="ECO:0000250"/>
    <property type="project" value="UniProtKB"/>
</dbReference>
<dbReference type="GO" id="GO:0010591">
    <property type="term" value="P:regulation of lamellipodium assembly"/>
    <property type="evidence" value="ECO:0000250"/>
    <property type="project" value="UniProtKB"/>
</dbReference>
<dbReference type="GO" id="GO:0051563">
    <property type="term" value="P:smooth endoplasmic reticulum calcium ion homeostasis"/>
    <property type="evidence" value="ECO:0000250"/>
    <property type="project" value="UniProtKB"/>
</dbReference>
<dbReference type="FunFam" id="1.10.950.10:FF:000002">
    <property type="entry name" value="Dematin isoform X2"/>
    <property type="match status" value="1"/>
</dbReference>
<dbReference type="Gene3D" id="1.10.950.10">
    <property type="entry name" value="Villin headpiece domain"/>
    <property type="match status" value="1"/>
</dbReference>
<dbReference type="InterPro" id="IPR032402">
    <property type="entry name" value="AbLIM_anchor"/>
</dbReference>
<dbReference type="InterPro" id="IPR051618">
    <property type="entry name" value="Actin-binding_LIM"/>
</dbReference>
<dbReference type="InterPro" id="IPR003128">
    <property type="entry name" value="Villin_headpiece"/>
</dbReference>
<dbReference type="InterPro" id="IPR036886">
    <property type="entry name" value="Villin_headpiece_dom_sf"/>
</dbReference>
<dbReference type="PANTHER" id="PTHR24213">
    <property type="entry name" value="ACTIN-BINDING LIM PROTEIN"/>
    <property type="match status" value="1"/>
</dbReference>
<dbReference type="PANTHER" id="PTHR24213:SF17">
    <property type="entry name" value="DEMATIN"/>
    <property type="match status" value="1"/>
</dbReference>
<dbReference type="Pfam" id="PF16182">
    <property type="entry name" value="AbLIM_anchor"/>
    <property type="match status" value="2"/>
</dbReference>
<dbReference type="Pfam" id="PF02209">
    <property type="entry name" value="VHP"/>
    <property type="match status" value="1"/>
</dbReference>
<dbReference type="SMART" id="SM00153">
    <property type="entry name" value="VHP"/>
    <property type="match status" value="1"/>
</dbReference>
<dbReference type="SUPFAM" id="SSF47050">
    <property type="entry name" value="VHP, Villin headpiece domain"/>
    <property type="match status" value="1"/>
</dbReference>
<dbReference type="PROSITE" id="PS51089">
    <property type="entry name" value="HP"/>
    <property type="match status" value="1"/>
</dbReference>
<gene>
    <name type="primary">DMTN</name>
    <name type="synonym">EPB49</name>
</gene>
<comment type="function">
    <text evidence="1">Membrane-cytoskeleton-associated protein with F-actin-binding activity that induces F-actin bundles formation and stabilization. Its F-actin-bundling activity is reversibly regulated upon its phosphorylation by the cAMP-dependent protein kinase A (PKA). Binds to the erythrocyte membrane glucose transporter-1 SLC2A1/GLUT1, and hence stabilizes and attaches the spectrin-actin network to the erythrocytic plasma membrane. Plays a role in maintaining the functional integrity of PKA-activated erythrocyte shape and the membrane mechanical properties. Also plays a role as a modulator of actin dynamics in fibroblasts; acts as a negative regulator of the RhoA activation pathway. In platelets, functions as a regulator of internal calcium mobilization across the dense tubular system that affects platelet granule secretion pathways and aggregation. Also required for the formation of a diverse set of cell protrusions, such as filopodia and lamellipodia, necessary for platelet cell spreading, motility and migration. Acts as a tumor suppressor and inhibits malignant cell transformation (By similarity).</text>
</comment>
<comment type="subunit">
    <text evidence="1">Monomeric; under reducing conditions. Self-associates. Exists under oxidizing condition as a trimer linked by disulfide bonds. Found in a complex with DMTN, F-actin and spectrin. Found in a complex with ADD2, DMTN and SLC2A1. Interacts with F-actin, ITPKB and spectrin. Interacts with SLC2A1 (via C-terminus cytoplasmic region). Interacts with RASGRF2 (By similarity).</text>
</comment>
<comment type="subcellular location">
    <subcellularLocation>
        <location evidence="1">Cytoplasm</location>
    </subcellularLocation>
    <subcellularLocation>
        <location evidence="1">Cytoplasm</location>
        <location evidence="1">Cytosol</location>
    </subcellularLocation>
    <subcellularLocation>
        <location evidence="1">Cytoplasm</location>
        <location evidence="1">Perinuclear region</location>
    </subcellularLocation>
    <subcellularLocation>
        <location evidence="1">Cytoplasm</location>
        <location evidence="1">Cytoskeleton</location>
    </subcellularLocation>
    <subcellularLocation>
        <location evidence="1">Cell membrane</location>
    </subcellularLocation>
    <subcellularLocation>
        <location evidence="1">Membrane</location>
    </subcellularLocation>
    <subcellularLocation>
        <location evidence="1">Endomembrane system</location>
    </subcellularLocation>
    <subcellularLocation>
        <location evidence="1">Cell projection</location>
    </subcellularLocation>
    <text evidence="1">Localized at the spectrin-actin junction of erythrocyte plasma membrane. Localized to intracellular membranes and the cytoskeletal network. Localized at intracellular membrane-bounded organelle compartment in platelets that likely represent the dense tubular network membrane (By similarity).</text>
</comment>
<comment type="domain">
    <text evidence="1">Both the N-terminal core domain and the C-terminal headpiece domain are sufficient for binding to F-actin and necessary for actin bundling activity.</text>
</comment>
<comment type="PTM">
    <text evidence="1">Phosphorylated. Phosphorylation at Ser-403 by PKA causes the C-terminal headpiece domain to associate with the N-terminal core domain, and leads to the inhibition of its actin bundling activity (By similarity).</text>
</comment>
<comment type="similarity">
    <text evidence="6">Belongs to the villin/gelsolin family.</text>
</comment>
<reference key="1">
    <citation type="submission" date="2004-11" db="EMBL/GenBank/DDBJ databases">
        <authorList>
            <consortium name="The German cDNA consortium"/>
        </authorList>
    </citation>
    <scope>NUCLEOTIDE SEQUENCE [LARGE SCALE MRNA]</scope>
    <source>
        <tissue>Brain cortex</tissue>
    </source>
</reference>
<keyword id="KW-0117">Actin capping</keyword>
<keyword id="KW-0009">Actin-binding</keyword>
<keyword id="KW-1003">Cell membrane</keyword>
<keyword id="KW-0966">Cell projection</keyword>
<keyword id="KW-0963">Cytoplasm</keyword>
<keyword id="KW-0206">Cytoskeleton</keyword>
<keyword id="KW-1015">Disulfide bond</keyword>
<keyword id="KW-0472">Membrane</keyword>
<keyword id="KW-0597">Phosphoprotein</keyword>
<keyword id="KW-1185">Reference proteome</keyword>
<keyword id="KW-0677">Repeat</keyword>
<keyword id="KW-0043">Tumor suppressor</keyword>
<name>DEMA_PONAB</name>
<protein>
    <recommendedName>
        <fullName>Dematin</fullName>
    </recommendedName>
    <alternativeName>
        <fullName>Dematin actin-binding protein</fullName>
    </alternativeName>
    <alternativeName>
        <fullName>Erythrocyte membrane protein band 4.9</fullName>
    </alternativeName>
</protein>
<accession>Q5R4B6</accession>
<proteinExistence type="evidence at transcript level"/>
<sequence>MERLQKQPLTSPGSVSPSRDSSVPGSPSSIVAKMDNQVLGYKDLAAIPKDKAILDIERPDLMIYEPHFTYSLLEHVELPRSRERSLSPKSTSPPPSPEVWADSRSPGIISQASAPRTTGTPRTSLPHFHHPETSRPDSNIYKKPPIYKQRESVGGSPQTKHLIEDLIIESSKFPAAQPPDPNQPAKIETDYWPCPPSLAVVETEWRKRKASRRGAEEEEEEEDDDSGEEMKALRERQREELSKVTSNLGKMILKEEMEKSLPIRRKTRSLPDRTPFHTSLHQGTSKSSSLPAYGRTTLSRLQSTEFSPSGSETGSPGLQNGEGQRGRMDRGNSLPCVLEQKIYPYEMLVVTNKGRTKLPPGVDRMRLERHLSAEDFSRVFAMSPEEFGKLALWKRNELKKKASLF</sequence>
<feature type="chain" id="PRO_0000218757" description="Dematin">
    <location>
        <begin position="1"/>
        <end position="405"/>
    </location>
</feature>
<feature type="domain" description="HP" evidence="4">
    <location>
        <begin position="337"/>
        <end position="405"/>
    </location>
</feature>
<feature type="region of interest" description="Disordered" evidence="5">
    <location>
        <begin position="1"/>
        <end position="30"/>
    </location>
</feature>
<feature type="region of interest" description="Disordered" evidence="5">
    <location>
        <begin position="79"/>
        <end position="158"/>
    </location>
</feature>
<feature type="region of interest" description="Disordered" evidence="5">
    <location>
        <begin position="173"/>
        <end position="192"/>
    </location>
</feature>
<feature type="region of interest" description="Disordered" evidence="5">
    <location>
        <begin position="203"/>
        <end position="332"/>
    </location>
</feature>
<feature type="region of interest" description="Interaction with RASGRF2" evidence="1">
    <location>
        <begin position="224"/>
        <end position="308"/>
    </location>
</feature>
<feature type="compositionally biased region" description="Low complexity" evidence="5">
    <location>
        <begin position="11"/>
        <end position="29"/>
    </location>
</feature>
<feature type="compositionally biased region" description="Polar residues" evidence="5">
    <location>
        <begin position="108"/>
        <end position="123"/>
    </location>
</feature>
<feature type="compositionally biased region" description="Acidic residues" evidence="5">
    <location>
        <begin position="216"/>
        <end position="227"/>
    </location>
</feature>
<feature type="compositionally biased region" description="Basic and acidic residues" evidence="5">
    <location>
        <begin position="228"/>
        <end position="242"/>
    </location>
</feature>
<feature type="compositionally biased region" description="Basic and acidic residues" evidence="5">
    <location>
        <begin position="252"/>
        <end position="261"/>
    </location>
</feature>
<feature type="compositionally biased region" description="Polar residues" evidence="5">
    <location>
        <begin position="276"/>
        <end position="322"/>
    </location>
</feature>
<feature type="modified residue" description="Phosphoserine" evidence="2">
    <location>
        <position position="16"/>
    </location>
</feature>
<feature type="modified residue" description="Phosphoserine" evidence="2">
    <location>
        <position position="18"/>
    </location>
</feature>
<feature type="modified residue" description="Phosphoserine" evidence="2">
    <location>
        <position position="26"/>
    </location>
</feature>
<feature type="modified residue" description="Phosphoserine" evidence="2">
    <location>
        <position position="92"/>
    </location>
</feature>
<feature type="modified residue" description="Phosphoserine" evidence="2">
    <location>
        <position position="96"/>
    </location>
</feature>
<feature type="modified residue" description="Phosphoserine" evidence="2">
    <location>
        <position position="105"/>
    </location>
</feature>
<feature type="modified residue" description="Phosphoserine" evidence="3">
    <location>
        <position position="110"/>
    </location>
</feature>
<feature type="modified residue" description="Phosphoserine" evidence="3">
    <location>
        <position position="113"/>
    </location>
</feature>
<feature type="modified residue" description="Phosphoserine" evidence="2">
    <location>
        <position position="156"/>
    </location>
</feature>
<feature type="modified residue" description="Phosphoserine" evidence="2">
    <location>
        <position position="226"/>
    </location>
</feature>
<feature type="modified residue" description="Phosphoserine" evidence="2">
    <location>
        <position position="269"/>
    </location>
</feature>
<feature type="modified residue" description="Phosphoserine" evidence="2">
    <location>
        <position position="279"/>
    </location>
</feature>
<feature type="modified residue" description="Phosphoserine" evidence="2">
    <location>
        <position position="289"/>
    </location>
</feature>
<feature type="modified residue" description="Phosphoserine" evidence="2">
    <location>
        <position position="303"/>
    </location>
</feature>
<feature type="modified residue" description="Phosphoserine" evidence="3">
    <location>
        <position position="315"/>
    </location>
</feature>
<feature type="modified residue" description="Phosphoserine" evidence="2">
    <location>
        <position position="333"/>
    </location>
</feature>
<feature type="modified residue" description="Phosphoserine" evidence="2">
    <location>
        <position position="372"/>
    </location>
</feature>
<feature type="modified residue" description="Phosphoserine" evidence="2">
    <location>
        <position position="383"/>
    </location>
</feature>
<feature type="modified residue" description="Phosphoserine; by PKA" evidence="2">
    <location>
        <position position="403"/>
    </location>
</feature>
<evidence type="ECO:0000250" key="1"/>
<evidence type="ECO:0000250" key="2">
    <source>
        <dbReference type="UniProtKB" id="Q08495"/>
    </source>
</evidence>
<evidence type="ECO:0000250" key="3">
    <source>
        <dbReference type="UniProtKB" id="Q9WV69"/>
    </source>
</evidence>
<evidence type="ECO:0000255" key="4">
    <source>
        <dbReference type="PROSITE-ProRule" id="PRU00595"/>
    </source>
</evidence>
<evidence type="ECO:0000256" key="5">
    <source>
        <dbReference type="SAM" id="MobiDB-lite"/>
    </source>
</evidence>
<evidence type="ECO:0000305" key="6"/>